<accession>B1YTS0</accession>
<feature type="chain" id="PRO_1000190919" description="Ketol-acid reductoisomerase (NADP(+))">
    <location>
        <begin position="1"/>
        <end position="338"/>
    </location>
</feature>
<feature type="domain" description="KARI N-terminal Rossmann" evidence="2">
    <location>
        <begin position="1"/>
        <end position="181"/>
    </location>
</feature>
<feature type="domain" description="KARI C-terminal knotted" evidence="3">
    <location>
        <begin position="182"/>
        <end position="327"/>
    </location>
</feature>
<feature type="active site" evidence="1">
    <location>
        <position position="107"/>
    </location>
</feature>
<feature type="binding site" evidence="1">
    <location>
        <begin position="24"/>
        <end position="27"/>
    </location>
    <ligand>
        <name>NADP(+)</name>
        <dbReference type="ChEBI" id="CHEBI:58349"/>
    </ligand>
</feature>
<feature type="binding site" evidence="1">
    <location>
        <position position="47"/>
    </location>
    <ligand>
        <name>NADP(+)</name>
        <dbReference type="ChEBI" id="CHEBI:58349"/>
    </ligand>
</feature>
<feature type="binding site" evidence="1">
    <location>
        <position position="52"/>
    </location>
    <ligand>
        <name>NADP(+)</name>
        <dbReference type="ChEBI" id="CHEBI:58349"/>
    </ligand>
</feature>
<feature type="binding site" evidence="1">
    <location>
        <position position="133"/>
    </location>
    <ligand>
        <name>NADP(+)</name>
        <dbReference type="ChEBI" id="CHEBI:58349"/>
    </ligand>
</feature>
<feature type="binding site" evidence="1">
    <location>
        <position position="190"/>
    </location>
    <ligand>
        <name>Mg(2+)</name>
        <dbReference type="ChEBI" id="CHEBI:18420"/>
        <label>1</label>
    </ligand>
</feature>
<feature type="binding site" evidence="1">
    <location>
        <position position="190"/>
    </location>
    <ligand>
        <name>Mg(2+)</name>
        <dbReference type="ChEBI" id="CHEBI:18420"/>
        <label>2</label>
    </ligand>
</feature>
<feature type="binding site" evidence="1">
    <location>
        <position position="194"/>
    </location>
    <ligand>
        <name>Mg(2+)</name>
        <dbReference type="ChEBI" id="CHEBI:18420"/>
        <label>1</label>
    </ligand>
</feature>
<feature type="binding site" evidence="1">
    <location>
        <position position="226"/>
    </location>
    <ligand>
        <name>Mg(2+)</name>
        <dbReference type="ChEBI" id="CHEBI:18420"/>
        <label>2</label>
    </ligand>
</feature>
<feature type="binding site" evidence="1">
    <location>
        <position position="230"/>
    </location>
    <ligand>
        <name>Mg(2+)</name>
        <dbReference type="ChEBI" id="CHEBI:18420"/>
        <label>2</label>
    </ligand>
</feature>
<feature type="binding site" evidence="1">
    <location>
        <position position="251"/>
    </location>
    <ligand>
        <name>substrate</name>
    </ligand>
</feature>
<gene>
    <name evidence="1" type="primary">ilvC</name>
    <name type="ordered locus">BamMC406_2179</name>
</gene>
<protein>
    <recommendedName>
        <fullName evidence="1">Ketol-acid reductoisomerase (NADP(+))</fullName>
        <shortName evidence="1">KARI</shortName>
        <ecNumber evidence="1">1.1.1.86</ecNumber>
    </recommendedName>
    <alternativeName>
        <fullName evidence="1">Acetohydroxy-acid isomeroreductase</fullName>
        <shortName evidence="1">AHIR</shortName>
    </alternativeName>
    <alternativeName>
        <fullName evidence="1">Alpha-keto-beta-hydroxylacyl reductoisomerase</fullName>
    </alternativeName>
    <alternativeName>
        <fullName evidence="1">Ketol-acid reductoisomerase type 1</fullName>
    </alternativeName>
    <alternativeName>
        <fullName evidence="1">Ketol-acid reductoisomerase type I</fullName>
    </alternativeName>
</protein>
<name>ILVC_BURA4</name>
<dbReference type="EC" id="1.1.1.86" evidence="1"/>
<dbReference type="EMBL" id="CP001025">
    <property type="protein sequence ID" value="ACB64658.1"/>
    <property type="molecule type" value="Genomic_DNA"/>
</dbReference>
<dbReference type="RefSeq" id="WP_006750446.1">
    <property type="nucleotide sequence ID" value="NC_010551.1"/>
</dbReference>
<dbReference type="SMR" id="B1YTS0"/>
<dbReference type="GeneID" id="93085491"/>
<dbReference type="KEGG" id="bac:BamMC406_2179"/>
<dbReference type="HOGENOM" id="CLU_033821_0_1_4"/>
<dbReference type="OrthoDB" id="9804088at2"/>
<dbReference type="UniPathway" id="UPA00047">
    <property type="reaction ID" value="UER00056"/>
</dbReference>
<dbReference type="UniPathway" id="UPA00049">
    <property type="reaction ID" value="UER00060"/>
</dbReference>
<dbReference type="Proteomes" id="UP000001680">
    <property type="component" value="Chromosome 1"/>
</dbReference>
<dbReference type="GO" id="GO:0005829">
    <property type="term" value="C:cytosol"/>
    <property type="evidence" value="ECO:0007669"/>
    <property type="project" value="TreeGrafter"/>
</dbReference>
<dbReference type="GO" id="GO:0004455">
    <property type="term" value="F:ketol-acid reductoisomerase activity"/>
    <property type="evidence" value="ECO:0007669"/>
    <property type="project" value="UniProtKB-UniRule"/>
</dbReference>
<dbReference type="GO" id="GO:0000287">
    <property type="term" value="F:magnesium ion binding"/>
    <property type="evidence" value="ECO:0007669"/>
    <property type="project" value="UniProtKB-UniRule"/>
</dbReference>
<dbReference type="GO" id="GO:0050661">
    <property type="term" value="F:NADP binding"/>
    <property type="evidence" value="ECO:0007669"/>
    <property type="project" value="InterPro"/>
</dbReference>
<dbReference type="GO" id="GO:0009097">
    <property type="term" value="P:isoleucine biosynthetic process"/>
    <property type="evidence" value="ECO:0007669"/>
    <property type="project" value="UniProtKB-UniRule"/>
</dbReference>
<dbReference type="GO" id="GO:0009099">
    <property type="term" value="P:L-valine biosynthetic process"/>
    <property type="evidence" value="ECO:0007669"/>
    <property type="project" value="UniProtKB-UniRule"/>
</dbReference>
<dbReference type="FunFam" id="3.40.50.720:FF:000023">
    <property type="entry name" value="Ketol-acid reductoisomerase (NADP(+))"/>
    <property type="match status" value="1"/>
</dbReference>
<dbReference type="Gene3D" id="6.10.240.10">
    <property type="match status" value="1"/>
</dbReference>
<dbReference type="Gene3D" id="3.40.50.720">
    <property type="entry name" value="NAD(P)-binding Rossmann-like Domain"/>
    <property type="match status" value="1"/>
</dbReference>
<dbReference type="HAMAP" id="MF_00435">
    <property type="entry name" value="IlvC"/>
    <property type="match status" value="1"/>
</dbReference>
<dbReference type="InterPro" id="IPR008927">
    <property type="entry name" value="6-PGluconate_DH-like_C_sf"/>
</dbReference>
<dbReference type="InterPro" id="IPR013023">
    <property type="entry name" value="KARI"/>
</dbReference>
<dbReference type="InterPro" id="IPR000506">
    <property type="entry name" value="KARI_C"/>
</dbReference>
<dbReference type="InterPro" id="IPR013116">
    <property type="entry name" value="KARI_N"/>
</dbReference>
<dbReference type="InterPro" id="IPR014359">
    <property type="entry name" value="KARI_prok"/>
</dbReference>
<dbReference type="InterPro" id="IPR036291">
    <property type="entry name" value="NAD(P)-bd_dom_sf"/>
</dbReference>
<dbReference type="NCBIfam" id="TIGR00465">
    <property type="entry name" value="ilvC"/>
    <property type="match status" value="1"/>
</dbReference>
<dbReference type="NCBIfam" id="NF004017">
    <property type="entry name" value="PRK05479.1"/>
    <property type="match status" value="1"/>
</dbReference>
<dbReference type="NCBIfam" id="NF009940">
    <property type="entry name" value="PRK13403.1"/>
    <property type="match status" value="1"/>
</dbReference>
<dbReference type="PANTHER" id="PTHR21371">
    <property type="entry name" value="KETOL-ACID REDUCTOISOMERASE, MITOCHONDRIAL"/>
    <property type="match status" value="1"/>
</dbReference>
<dbReference type="PANTHER" id="PTHR21371:SF1">
    <property type="entry name" value="KETOL-ACID REDUCTOISOMERASE, MITOCHONDRIAL"/>
    <property type="match status" value="1"/>
</dbReference>
<dbReference type="Pfam" id="PF01450">
    <property type="entry name" value="KARI_C"/>
    <property type="match status" value="1"/>
</dbReference>
<dbReference type="Pfam" id="PF07991">
    <property type="entry name" value="KARI_N"/>
    <property type="match status" value="1"/>
</dbReference>
<dbReference type="PIRSF" id="PIRSF000116">
    <property type="entry name" value="IlvC_gammaproteo"/>
    <property type="match status" value="1"/>
</dbReference>
<dbReference type="SUPFAM" id="SSF48179">
    <property type="entry name" value="6-phosphogluconate dehydrogenase C-terminal domain-like"/>
    <property type="match status" value="1"/>
</dbReference>
<dbReference type="SUPFAM" id="SSF51735">
    <property type="entry name" value="NAD(P)-binding Rossmann-fold domains"/>
    <property type="match status" value="1"/>
</dbReference>
<dbReference type="PROSITE" id="PS51851">
    <property type="entry name" value="KARI_C"/>
    <property type="match status" value="1"/>
</dbReference>
<dbReference type="PROSITE" id="PS51850">
    <property type="entry name" value="KARI_N"/>
    <property type="match status" value="1"/>
</dbReference>
<evidence type="ECO:0000255" key="1">
    <source>
        <dbReference type="HAMAP-Rule" id="MF_00435"/>
    </source>
</evidence>
<evidence type="ECO:0000255" key="2">
    <source>
        <dbReference type="PROSITE-ProRule" id="PRU01197"/>
    </source>
</evidence>
<evidence type="ECO:0000255" key="3">
    <source>
        <dbReference type="PROSITE-ProRule" id="PRU01198"/>
    </source>
</evidence>
<keyword id="KW-0028">Amino-acid biosynthesis</keyword>
<keyword id="KW-0100">Branched-chain amino acid biosynthesis</keyword>
<keyword id="KW-0460">Magnesium</keyword>
<keyword id="KW-0479">Metal-binding</keyword>
<keyword id="KW-0521">NADP</keyword>
<keyword id="KW-0560">Oxidoreductase</keyword>
<proteinExistence type="inferred from homology"/>
<organism>
    <name type="scientific">Burkholderia ambifaria (strain MC40-6)</name>
    <dbReference type="NCBI Taxonomy" id="398577"/>
    <lineage>
        <taxon>Bacteria</taxon>
        <taxon>Pseudomonadati</taxon>
        <taxon>Pseudomonadota</taxon>
        <taxon>Betaproteobacteria</taxon>
        <taxon>Burkholderiales</taxon>
        <taxon>Burkholderiaceae</taxon>
        <taxon>Burkholderia</taxon>
        <taxon>Burkholderia cepacia complex</taxon>
    </lineage>
</organism>
<reference key="1">
    <citation type="submission" date="2008-04" db="EMBL/GenBank/DDBJ databases">
        <title>Complete sequence of chromosome 1 of Burkholderia ambifaria MC40-6.</title>
        <authorList>
            <person name="Copeland A."/>
            <person name="Lucas S."/>
            <person name="Lapidus A."/>
            <person name="Glavina del Rio T."/>
            <person name="Dalin E."/>
            <person name="Tice H."/>
            <person name="Pitluck S."/>
            <person name="Chain P."/>
            <person name="Malfatti S."/>
            <person name="Shin M."/>
            <person name="Vergez L."/>
            <person name="Lang D."/>
            <person name="Schmutz J."/>
            <person name="Larimer F."/>
            <person name="Land M."/>
            <person name="Hauser L."/>
            <person name="Kyrpides N."/>
            <person name="Lykidis A."/>
            <person name="Ramette A."/>
            <person name="Konstantinidis K."/>
            <person name="Tiedje J."/>
            <person name="Richardson P."/>
        </authorList>
    </citation>
    <scope>NUCLEOTIDE SEQUENCE [LARGE SCALE GENOMIC DNA]</scope>
    <source>
        <strain>MC40-6</strain>
    </source>
</reference>
<comment type="function">
    <text evidence="1">Involved in the biosynthesis of branched-chain amino acids (BCAA). Catalyzes an alkyl-migration followed by a ketol-acid reduction of (S)-2-acetolactate (S2AL) to yield (R)-2,3-dihydroxy-isovalerate. In the isomerase reaction, S2AL is rearranged via a Mg-dependent methyl migration to produce 3-hydroxy-3-methyl-2-ketobutyrate (HMKB). In the reductase reaction, this 2-ketoacid undergoes a metal-dependent reduction by NADPH to yield (R)-2,3-dihydroxy-isovalerate.</text>
</comment>
<comment type="catalytic activity">
    <reaction evidence="1">
        <text>(2R)-2,3-dihydroxy-3-methylbutanoate + NADP(+) = (2S)-2-acetolactate + NADPH + H(+)</text>
        <dbReference type="Rhea" id="RHEA:22068"/>
        <dbReference type="ChEBI" id="CHEBI:15378"/>
        <dbReference type="ChEBI" id="CHEBI:49072"/>
        <dbReference type="ChEBI" id="CHEBI:57783"/>
        <dbReference type="ChEBI" id="CHEBI:58349"/>
        <dbReference type="ChEBI" id="CHEBI:58476"/>
        <dbReference type="EC" id="1.1.1.86"/>
    </reaction>
</comment>
<comment type="catalytic activity">
    <reaction evidence="1">
        <text>(2R,3R)-2,3-dihydroxy-3-methylpentanoate + NADP(+) = (S)-2-ethyl-2-hydroxy-3-oxobutanoate + NADPH + H(+)</text>
        <dbReference type="Rhea" id="RHEA:13493"/>
        <dbReference type="ChEBI" id="CHEBI:15378"/>
        <dbReference type="ChEBI" id="CHEBI:49256"/>
        <dbReference type="ChEBI" id="CHEBI:49258"/>
        <dbReference type="ChEBI" id="CHEBI:57783"/>
        <dbReference type="ChEBI" id="CHEBI:58349"/>
        <dbReference type="EC" id="1.1.1.86"/>
    </reaction>
</comment>
<comment type="cofactor">
    <cofactor evidence="1">
        <name>Mg(2+)</name>
        <dbReference type="ChEBI" id="CHEBI:18420"/>
    </cofactor>
    <text evidence="1">Binds 2 magnesium ions per subunit.</text>
</comment>
<comment type="pathway">
    <text evidence="1">Amino-acid biosynthesis; L-isoleucine biosynthesis; L-isoleucine from 2-oxobutanoate: step 2/4.</text>
</comment>
<comment type="pathway">
    <text evidence="1">Amino-acid biosynthesis; L-valine biosynthesis; L-valine from pyruvate: step 2/4.</text>
</comment>
<comment type="similarity">
    <text evidence="1">Belongs to the ketol-acid reductoisomerase family.</text>
</comment>
<sequence>MNVFYDKDADLSLIKGKQVTIIGYGSQGHAHALNLKDSGVNVTVGLRKDGASWSKAENAGLSVKEVAEAVKGADVVMMLLPDEQIADVYAKEVHANIKQGAALAFAHGFNVHYGQVIPRADLDVIMIAPKAPGHTVRGTYSQGGGVPHLIAVAQNKSGAARDIALSYAAANGGGRAGIIETNFREETETDLFGEQAVLCGGTVELIKAGFETLVEAGYAPEMAYFECLHELKLIVDLIYEGGIANMNYSISNNAEYGEYVTGPRVVTEETKKAMKQCLTDIQTGEYAKSFILENKAGAPTLQSRRRLTAEHQIEQVGAKLRAMMPWIAKNKLVDQTKN</sequence>